<evidence type="ECO:0000255" key="1">
    <source>
        <dbReference type="HAMAP-Rule" id="MF_01334"/>
    </source>
</evidence>
<evidence type="ECO:0000305" key="2"/>
<dbReference type="EMBL" id="CP001124">
    <property type="protein sequence ID" value="ACH39771.1"/>
    <property type="molecule type" value="Genomic_DNA"/>
</dbReference>
<dbReference type="RefSeq" id="WP_012531197.1">
    <property type="nucleotide sequence ID" value="NC_011146.1"/>
</dbReference>
<dbReference type="SMR" id="B5EHX2"/>
<dbReference type="STRING" id="404380.Gbem_2767"/>
<dbReference type="KEGG" id="gbm:Gbem_2767"/>
<dbReference type="eggNOG" id="COG1825">
    <property type="taxonomic scope" value="Bacteria"/>
</dbReference>
<dbReference type="HOGENOM" id="CLU_075939_2_1_7"/>
<dbReference type="OrthoDB" id="9786489at2"/>
<dbReference type="Proteomes" id="UP000008825">
    <property type="component" value="Chromosome"/>
</dbReference>
<dbReference type="GO" id="GO:0022625">
    <property type="term" value="C:cytosolic large ribosomal subunit"/>
    <property type="evidence" value="ECO:0007669"/>
    <property type="project" value="TreeGrafter"/>
</dbReference>
<dbReference type="GO" id="GO:0008097">
    <property type="term" value="F:5S rRNA binding"/>
    <property type="evidence" value="ECO:0007669"/>
    <property type="project" value="InterPro"/>
</dbReference>
<dbReference type="GO" id="GO:0003735">
    <property type="term" value="F:structural constituent of ribosome"/>
    <property type="evidence" value="ECO:0007669"/>
    <property type="project" value="InterPro"/>
</dbReference>
<dbReference type="GO" id="GO:0006412">
    <property type="term" value="P:translation"/>
    <property type="evidence" value="ECO:0007669"/>
    <property type="project" value="UniProtKB-UniRule"/>
</dbReference>
<dbReference type="CDD" id="cd00495">
    <property type="entry name" value="Ribosomal_L25_TL5_CTC"/>
    <property type="match status" value="1"/>
</dbReference>
<dbReference type="Gene3D" id="2.170.120.20">
    <property type="entry name" value="Ribosomal protein L25, beta domain"/>
    <property type="match status" value="1"/>
</dbReference>
<dbReference type="Gene3D" id="2.40.240.10">
    <property type="entry name" value="Ribosomal Protein L25, Chain P"/>
    <property type="match status" value="1"/>
</dbReference>
<dbReference type="HAMAP" id="MF_01334">
    <property type="entry name" value="Ribosomal_bL25_CTC"/>
    <property type="match status" value="1"/>
</dbReference>
<dbReference type="InterPro" id="IPR020056">
    <property type="entry name" value="Rbsml_bL25/Gln-tRNA_synth_N"/>
</dbReference>
<dbReference type="InterPro" id="IPR011035">
    <property type="entry name" value="Ribosomal_bL25/Gln-tRNA_synth"/>
</dbReference>
<dbReference type="InterPro" id="IPR020057">
    <property type="entry name" value="Ribosomal_bL25_b-dom"/>
</dbReference>
<dbReference type="InterPro" id="IPR037121">
    <property type="entry name" value="Ribosomal_bL25_C"/>
</dbReference>
<dbReference type="InterPro" id="IPR001021">
    <property type="entry name" value="Ribosomal_bL25_long"/>
</dbReference>
<dbReference type="InterPro" id="IPR029751">
    <property type="entry name" value="Ribosomal_L25_dom"/>
</dbReference>
<dbReference type="InterPro" id="IPR020930">
    <property type="entry name" value="Ribosomal_uL5_bac-type"/>
</dbReference>
<dbReference type="NCBIfam" id="TIGR00731">
    <property type="entry name" value="bL25_bact_ctc"/>
    <property type="match status" value="1"/>
</dbReference>
<dbReference type="PANTHER" id="PTHR33284">
    <property type="entry name" value="RIBOSOMAL PROTEIN L25/GLN-TRNA SYNTHETASE, ANTI-CODON-BINDING DOMAIN-CONTAINING PROTEIN"/>
    <property type="match status" value="1"/>
</dbReference>
<dbReference type="PANTHER" id="PTHR33284:SF1">
    <property type="entry name" value="RIBOSOMAL PROTEIN L25_GLN-TRNA SYNTHETASE, ANTI-CODON-BINDING DOMAIN-CONTAINING PROTEIN"/>
    <property type="match status" value="1"/>
</dbReference>
<dbReference type="Pfam" id="PF01386">
    <property type="entry name" value="Ribosomal_L25p"/>
    <property type="match status" value="1"/>
</dbReference>
<dbReference type="Pfam" id="PF14693">
    <property type="entry name" value="Ribosomal_TL5_C"/>
    <property type="match status" value="1"/>
</dbReference>
<dbReference type="SUPFAM" id="SSF50715">
    <property type="entry name" value="Ribosomal protein L25-like"/>
    <property type="match status" value="1"/>
</dbReference>
<sequence>MSKQVLKAELREQTGKGICRRLRAAGRVPAVVYGKGIAPVSISLGQKELSEAIAGEGGRNHILTLECAGELNGASVIVADLLRDSLKNVPRHVDLHKINLADKVKVHVKLNLVGTPAGVKAGGFLDFAMHEVEVECLPVHIPAHINVDVAELLIGHSVHVGQIVAPIGTAILSDPKASVVSILGRKGAAEEEAAPAA</sequence>
<protein>
    <recommendedName>
        <fullName evidence="1">Large ribosomal subunit protein bL25</fullName>
    </recommendedName>
    <alternativeName>
        <fullName evidence="2">50S ribosomal protein L25</fullName>
    </alternativeName>
    <alternativeName>
        <fullName evidence="1">General stress protein CTC</fullName>
    </alternativeName>
</protein>
<gene>
    <name evidence="1" type="primary">rplY</name>
    <name evidence="1" type="synonym">ctc</name>
    <name type="ordered locus">Gbem_2767</name>
</gene>
<proteinExistence type="inferred from homology"/>
<feature type="chain" id="PRO_1000142522" description="Large ribosomal subunit protein bL25">
    <location>
        <begin position="1"/>
        <end position="197"/>
    </location>
</feature>
<organism>
    <name type="scientific">Citrifermentans bemidjiense (strain ATCC BAA-1014 / DSM 16622 / JCM 12645 / Bem)</name>
    <name type="common">Geobacter bemidjiensis</name>
    <dbReference type="NCBI Taxonomy" id="404380"/>
    <lineage>
        <taxon>Bacteria</taxon>
        <taxon>Pseudomonadati</taxon>
        <taxon>Thermodesulfobacteriota</taxon>
        <taxon>Desulfuromonadia</taxon>
        <taxon>Geobacterales</taxon>
        <taxon>Geobacteraceae</taxon>
        <taxon>Citrifermentans</taxon>
    </lineage>
</organism>
<name>RL25_CITBB</name>
<comment type="function">
    <text evidence="1">This is one of the proteins that binds to the 5S RNA in the ribosome where it forms part of the central protuberance.</text>
</comment>
<comment type="subunit">
    <text evidence="1">Part of the 50S ribosomal subunit; part of the 5S rRNA/L5/L18/L25 subcomplex. Contacts the 5S rRNA. Binds to the 5S rRNA independently of L5 and L18.</text>
</comment>
<comment type="similarity">
    <text evidence="1">Belongs to the bacterial ribosomal protein bL25 family. CTC subfamily.</text>
</comment>
<accession>B5EHX2</accession>
<reference key="1">
    <citation type="submission" date="2008-07" db="EMBL/GenBank/DDBJ databases">
        <title>Complete sequence of Geobacter bemidjiensis BEM.</title>
        <authorList>
            <consortium name="US DOE Joint Genome Institute"/>
            <person name="Lucas S."/>
            <person name="Copeland A."/>
            <person name="Lapidus A."/>
            <person name="Glavina del Rio T."/>
            <person name="Dalin E."/>
            <person name="Tice H."/>
            <person name="Bruce D."/>
            <person name="Goodwin L."/>
            <person name="Pitluck S."/>
            <person name="Kiss H."/>
            <person name="Brettin T."/>
            <person name="Detter J.C."/>
            <person name="Han C."/>
            <person name="Kuske C.R."/>
            <person name="Schmutz J."/>
            <person name="Larimer F."/>
            <person name="Land M."/>
            <person name="Hauser L."/>
            <person name="Kyrpides N."/>
            <person name="Lykidis A."/>
            <person name="Lovley D."/>
            <person name="Richardson P."/>
        </authorList>
    </citation>
    <scope>NUCLEOTIDE SEQUENCE [LARGE SCALE GENOMIC DNA]</scope>
    <source>
        <strain>ATCC BAA-1014 / DSM 16622 / JCM 12645 / Bem</strain>
    </source>
</reference>
<keyword id="KW-1185">Reference proteome</keyword>
<keyword id="KW-0687">Ribonucleoprotein</keyword>
<keyword id="KW-0689">Ribosomal protein</keyword>
<keyword id="KW-0694">RNA-binding</keyword>
<keyword id="KW-0699">rRNA-binding</keyword>